<accession>Q5HGX2</accession>
<feature type="chain" id="PRO_0000110651" description="UPF0358 protein SACOL1121">
    <location>
        <begin position="1"/>
        <end position="91"/>
    </location>
</feature>
<proteinExistence type="inferred from homology"/>
<comment type="similarity">
    <text evidence="1">Belongs to the UPF0358 family.</text>
</comment>
<name>Y1121_STAAC</name>
<sequence>MAKQATMKNAALKQLTKDADEILHLIKVQLDNLTLPSCPLYEEVLDTQMFGLQKEVDFAVKLGLVDREDGKQIMLRLEKELSKLHEAFTLV</sequence>
<dbReference type="EMBL" id="CP000046">
    <property type="protein sequence ID" value="AAW38001.1"/>
    <property type="molecule type" value="Genomic_DNA"/>
</dbReference>
<dbReference type="RefSeq" id="WP_001118417.1">
    <property type="nucleotide sequence ID" value="NZ_JBGOFO010000002.1"/>
</dbReference>
<dbReference type="SMR" id="Q5HGX2"/>
<dbReference type="KEGG" id="sac:SACOL1121"/>
<dbReference type="HOGENOM" id="CLU_160493_1_0_9"/>
<dbReference type="Proteomes" id="UP000000530">
    <property type="component" value="Chromosome"/>
</dbReference>
<dbReference type="Gene3D" id="1.10.287.750">
    <property type="entry name" value="SO2669-like"/>
    <property type="match status" value="1"/>
</dbReference>
<dbReference type="HAMAP" id="MF_01560">
    <property type="entry name" value="UPF0358"/>
    <property type="match status" value="1"/>
</dbReference>
<dbReference type="InterPro" id="IPR009983">
    <property type="entry name" value="UPF0358"/>
</dbReference>
<dbReference type="InterPro" id="IPR036270">
    <property type="entry name" value="UPF0358_sf"/>
</dbReference>
<dbReference type="NCBIfam" id="NF010187">
    <property type="entry name" value="PRK13666.1"/>
    <property type="match status" value="1"/>
</dbReference>
<dbReference type="Pfam" id="PF07408">
    <property type="entry name" value="DUF1507"/>
    <property type="match status" value="1"/>
</dbReference>
<dbReference type="SUPFAM" id="SSF140404">
    <property type="entry name" value="EF2458-like"/>
    <property type="match status" value="1"/>
</dbReference>
<protein>
    <recommendedName>
        <fullName evidence="1">UPF0358 protein SACOL1121</fullName>
    </recommendedName>
</protein>
<evidence type="ECO:0000255" key="1">
    <source>
        <dbReference type="HAMAP-Rule" id="MF_01560"/>
    </source>
</evidence>
<gene>
    <name type="ordered locus">SACOL1121</name>
</gene>
<organism>
    <name type="scientific">Staphylococcus aureus (strain COL)</name>
    <dbReference type="NCBI Taxonomy" id="93062"/>
    <lineage>
        <taxon>Bacteria</taxon>
        <taxon>Bacillati</taxon>
        <taxon>Bacillota</taxon>
        <taxon>Bacilli</taxon>
        <taxon>Bacillales</taxon>
        <taxon>Staphylococcaceae</taxon>
        <taxon>Staphylococcus</taxon>
    </lineage>
</organism>
<reference key="1">
    <citation type="journal article" date="2005" name="J. Bacteriol.">
        <title>Insights on evolution of virulence and resistance from the complete genome analysis of an early methicillin-resistant Staphylococcus aureus strain and a biofilm-producing methicillin-resistant Staphylococcus epidermidis strain.</title>
        <authorList>
            <person name="Gill S.R."/>
            <person name="Fouts D.E."/>
            <person name="Archer G.L."/>
            <person name="Mongodin E.F."/>
            <person name="DeBoy R.T."/>
            <person name="Ravel J."/>
            <person name="Paulsen I.T."/>
            <person name="Kolonay J.F."/>
            <person name="Brinkac L.M."/>
            <person name="Beanan M.J."/>
            <person name="Dodson R.J."/>
            <person name="Daugherty S.C."/>
            <person name="Madupu R."/>
            <person name="Angiuoli S.V."/>
            <person name="Durkin A.S."/>
            <person name="Haft D.H."/>
            <person name="Vamathevan J.J."/>
            <person name="Khouri H."/>
            <person name="Utterback T.R."/>
            <person name="Lee C."/>
            <person name="Dimitrov G."/>
            <person name="Jiang L."/>
            <person name="Qin H."/>
            <person name="Weidman J."/>
            <person name="Tran K."/>
            <person name="Kang K.H."/>
            <person name="Hance I.R."/>
            <person name="Nelson K.E."/>
            <person name="Fraser C.M."/>
        </authorList>
    </citation>
    <scope>NUCLEOTIDE SEQUENCE [LARGE SCALE GENOMIC DNA]</scope>
    <source>
        <strain>COL</strain>
    </source>
</reference>